<accession>A4G3R6</accession>
<name>COBQ_HERAR</name>
<dbReference type="EMBL" id="CU207211">
    <property type="protein sequence ID" value="CAL61153.1"/>
    <property type="molecule type" value="Genomic_DNA"/>
</dbReference>
<dbReference type="SMR" id="A4G3R6"/>
<dbReference type="STRING" id="204773.HEAR0970"/>
<dbReference type="KEGG" id="har:HEAR0970"/>
<dbReference type="eggNOG" id="COG1492">
    <property type="taxonomic scope" value="Bacteria"/>
</dbReference>
<dbReference type="HOGENOM" id="CLU_019250_2_2_4"/>
<dbReference type="UniPathway" id="UPA00148"/>
<dbReference type="Proteomes" id="UP000006697">
    <property type="component" value="Chromosome"/>
</dbReference>
<dbReference type="GO" id="GO:0015420">
    <property type="term" value="F:ABC-type vitamin B12 transporter activity"/>
    <property type="evidence" value="ECO:0007669"/>
    <property type="project" value="UniProtKB-UniRule"/>
</dbReference>
<dbReference type="GO" id="GO:0003824">
    <property type="term" value="F:catalytic activity"/>
    <property type="evidence" value="ECO:0007669"/>
    <property type="project" value="InterPro"/>
</dbReference>
<dbReference type="GO" id="GO:0009236">
    <property type="term" value="P:cobalamin biosynthetic process"/>
    <property type="evidence" value="ECO:0007669"/>
    <property type="project" value="UniProtKB-UniRule"/>
</dbReference>
<dbReference type="CDD" id="cd05389">
    <property type="entry name" value="CobQ_N"/>
    <property type="match status" value="1"/>
</dbReference>
<dbReference type="CDD" id="cd01750">
    <property type="entry name" value="GATase1_CobQ"/>
    <property type="match status" value="1"/>
</dbReference>
<dbReference type="Gene3D" id="3.40.50.880">
    <property type="match status" value="1"/>
</dbReference>
<dbReference type="Gene3D" id="3.40.50.300">
    <property type="entry name" value="P-loop containing nucleotide triphosphate hydrolases"/>
    <property type="match status" value="1"/>
</dbReference>
<dbReference type="HAMAP" id="MF_00028">
    <property type="entry name" value="CobQ"/>
    <property type="match status" value="1"/>
</dbReference>
<dbReference type="InterPro" id="IPR029062">
    <property type="entry name" value="Class_I_gatase-like"/>
</dbReference>
<dbReference type="InterPro" id="IPR002586">
    <property type="entry name" value="CobQ/CobB/MinD/ParA_Nub-bd_dom"/>
</dbReference>
<dbReference type="InterPro" id="IPR033949">
    <property type="entry name" value="CobQ_GATase1"/>
</dbReference>
<dbReference type="InterPro" id="IPR047045">
    <property type="entry name" value="CobQ_N"/>
</dbReference>
<dbReference type="InterPro" id="IPR004459">
    <property type="entry name" value="CobQ_synth"/>
</dbReference>
<dbReference type="InterPro" id="IPR011698">
    <property type="entry name" value="GATase_3"/>
</dbReference>
<dbReference type="InterPro" id="IPR027417">
    <property type="entry name" value="P-loop_NTPase"/>
</dbReference>
<dbReference type="NCBIfam" id="TIGR00313">
    <property type="entry name" value="cobQ"/>
    <property type="match status" value="1"/>
</dbReference>
<dbReference type="NCBIfam" id="NF001989">
    <property type="entry name" value="PRK00784.1"/>
    <property type="match status" value="1"/>
</dbReference>
<dbReference type="PANTHER" id="PTHR21343:SF1">
    <property type="entry name" value="COBYRIC ACID SYNTHASE"/>
    <property type="match status" value="1"/>
</dbReference>
<dbReference type="PANTHER" id="PTHR21343">
    <property type="entry name" value="DETHIOBIOTIN SYNTHETASE"/>
    <property type="match status" value="1"/>
</dbReference>
<dbReference type="Pfam" id="PF01656">
    <property type="entry name" value="CbiA"/>
    <property type="match status" value="1"/>
</dbReference>
<dbReference type="Pfam" id="PF07685">
    <property type="entry name" value="GATase_3"/>
    <property type="match status" value="1"/>
</dbReference>
<dbReference type="SUPFAM" id="SSF52317">
    <property type="entry name" value="Class I glutamine amidotransferase-like"/>
    <property type="match status" value="1"/>
</dbReference>
<dbReference type="SUPFAM" id="SSF52540">
    <property type="entry name" value="P-loop containing nucleoside triphosphate hydrolases"/>
    <property type="match status" value="1"/>
</dbReference>
<dbReference type="PROSITE" id="PS51274">
    <property type="entry name" value="GATASE_COBBQ"/>
    <property type="match status" value="1"/>
</dbReference>
<reference key="1">
    <citation type="journal article" date="2007" name="PLoS Genet.">
        <title>A tale of two oxidation states: bacterial colonization of arsenic-rich environments.</title>
        <authorList>
            <person name="Muller D."/>
            <person name="Medigue C."/>
            <person name="Koechler S."/>
            <person name="Barbe V."/>
            <person name="Barakat M."/>
            <person name="Talla E."/>
            <person name="Bonnefoy V."/>
            <person name="Krin E."/>
            <person name="Arsene-Ploetze F."/>
            <person name="Carapito C."/>
            <person name="Chandler M."/>
            <person name="Cournoyer B."/>
            <person name="Cruveiller S."/>
            <person name="Dossat C."/>
            <person name="Duval S."/>
            <person name="Heymann M."/>
            <person name="Leize E."/>
            <person name="Lieutaud A."/>
            <person name="Lievremont D."/>
            <person name="Makita Y."/>
            <person name="Mangenot S."/>
            <person name="Nitschke W."/>
            <person name="Ortet P."/>
            <person name="Perdrial N."/>
            <person name="Schoepp B."/>
            <person name="Siguier P."/>
            <person name="Simeonova D.D."/>
            <person name="Rouy Z."/>
            <person name="Segurens B."/>
            <person name="Turlin E."/>
            <person name="Vallenet D."/>
            <person name="van Dorsselaer A."/>
            <person name="Weiss S."/>
            <person name="Weissenbach J."/>
            <person name="Lett M.-C."/>
            <person name="Danchin A."/>
            <person name="Bertin P.N."/>
        </authorList>
    </citation>
    <scope>NUCLEOTIDE SEQUENCE [LARGE SCALE GENOMIC DNA]</scope>
    <source>
        <strain>ULPAs1</strain>
    </source>
</reference>
<gene>
    <name evidence="1" type="primary">cobQ</name>
    <name type="ordered locus">HEAR0970</name>
</gene>
<feature type="chain" id="PRO_0000332341" description="Cobyric acid synthase">
    <location>
        <begin position="1"/>
        <end position="486"/>
    </location>
</feature>
<feature type="domain" description="GATase cobBQ-type" evidence="1">
    <location>
        <begin position="250"/>
        <end position="438"/>
    </location>
</feature>
<feature type="active site" description="Nucleophile" evidence="1">
    <location>
        <position position="331"/>
    </location>
</feature>
<feature type="active site" evidence="1">
    <location>
        <position position="430"/>
    </location>
</feature>
<protein>
    <recommendedName>
        <fullName evidence="1">Cobyric acid synthase</fullName>
    </recommendedName>
</protein>
<evidence type="ECO:0000255" key="1">
    <source>
        <dbReference type="HAMAP-Rule" id="MF_00028"/>
    </source>
</evidence>
<proteinExistence type="inferred from homology"/>
<organism>
    <name type="scientific">Herminiimonas arsenicoxydans</name>
    <dbReference type="NCBI Taxonomy" id="204773"/>
    <lineage>
        <taxon>Bacteria</taxon>
        <taxon>Pseudomonadati</taxon>
        <taxon>Pseudomonadota</taxon>
        <taxon>Betaproteobacteria</taxon>
        <taxon>Burkholderiales</taxon>
        <taxon>Oxalobacteraceae</taxon>
        <taxon>Herminiimonas</taxon>
    </lineage>
</organism>
<comment type="function">
    <text evidence="1">Catalyzes amidations at positions B, D, E, and G on adenosylcobyrinic A,C-diamide. NH(2) groups are provided by glutamine, and one molecule of ATP is hydrogenolyzed for each amidation.</text>
</comment>
<comment type="pathway">
    <text evidence="1">Cofactor biosynthesis; adenosylcobalamin biosynthesis.</text>
</comment>
<comment type="similarity">
    <text evidence="1">Belongs to the CobB/CobQ family. CobQ subfamily.</text>
</comment>
<sequence length="486" mass="51788">MKFPFPTLMVQGTTSDAGKTTLVAALCRLLAQQGVRVVPFKPQNMALNSAVTADGGEIGRAQALQAVAAGLPPHTDMNPILLKPSSDTGAQVIIHGRARNDMNARDYHAYKPIAMQAVLESYGRLSAQYETVLVEGAGSPAEVNLRDRDIANMGFAEAVDCPVILVADIDRGGVFAHIIGTLACLSESERKRTIGFVINRFRGDISLLEPGLRWLEEQTGKPVLAVLPYLHGLFLDAEDAVEQTQTARGAFRIVVPVPPRISNHTDFDALRAHPDVDLQLIGPGQPIPAADLIILPGSKNTRGDLDWLIANGWREALIRHARYGGKIIGICGGYQMLGKTIADPQGVEGLPGISQGLALLDITTVLTPEKQLEQVHGMCAFADTDAAVSGYEIHMGLSEGEACSHPAFVIAGRPEGARSADDQILGSYLHGMFDTPSACSALLRWAGLDSDVAVDTARLREASLDRIAQAAQPLLDALCALDPPTA</sequence>
<keyword id="KW-0169">Cobalamin biosynthesis</keyword>
<keyword id="KW-0315">Glutamine amidotransferase</keyword>
<keyword id="KW-1185">Reference proteome</keyword>